<protein>
    <recommendedName>
        <fullName evidence="1">Fructose-1,6-bisphosphatase class 1</fullName>
        <shortName evidence="1">FBPase class 1</shortName>
        <ecNumber evidence="1">3.1.3.11</ecNumber>
    </recommendedName>
    <alternativeName>
        <fullName evidence="1">D-fructose-1,6-bisphosphate 1-phosphohydrolase class 1</fullName>
    </alternativeName>
</protein>
<organism>
    <name type="scientific">Psychrobacter sp. (strain PRwf-1)</name>
    <dbReference type="NCBI Taxonomy" id="349106"/>
    <lineage>
        <taxon>Bacteria</taxon>
        <taxon>Pseudomonadati</taxon>
        <taxon>Pseudomonadota</taxon>
        <taxon>Gammaproteobacteria</taxon>
        <taxon>Moraxellales</taxon>
        <taxon>Moraxellaceae</taxon>
        <taxon>Psychrobacter</taxon>
    </lineage>
</organism>
<proteinExistence type="inferred from homology"/>
<gene>
    <name evidence="1" type="primary">fbp</name>
    <name type="ordered locus">PsycPRwf_1857</name>
</gene>
<accession>A5WGK6</accession>
<name>F16PA_PSYWF</name>
<dbReference type="EC" id="3.1.3.11" evidence="1"/>
<dbReference type="EMBL" id="CP000713">
    <property type="protein sequence ID" value="ABQ94797.1"/>
    <property type="molecule type" value="Genomic_DNA"/>
</dbReference>
<dbReference type="SMR" id="A5WGK6"/>
<dbReference type="STRING" id="349106.PsycPRwf_1857"/>
<dbReference type="KEGG" id="prw:PsycPRwf_1857"/>
<dbReference type="eggNOG" id="COG0158">
    <property type="taxonomic scope" value="Bacteria"/>
</dbReference>
<dbReference type="HOGENOM" id="CLU_039977_0_0_6"/>
<dbReference type="UniPathway" id="UPA00138"/>
<dbReference type="GO" id="GO:0005829">
    <property type="term" value="C:cytosol"/>
    <property type="evidence" value="ECO:0007669"/>
    <property type="project" value="TreeGrafter"/>
</dbReference>
<dbReference type="GO" id="GO:0042132">
    <property type="term" value="F:fructose 1,6-bisphosphate 1-phosphatase activity"/>
    <property type="evidence" value="ECO:0007669"/>
    <property type="project" value="UniProtKB-UniRule"/>
</dbReference>
<dbReference type="GO" id="GO:0000287">
    <property type="term" value="F:magnesium ion binding"/>
    <property type="evidence" value="ECO:0007669"/>
    <property type="project" value="UniProtKB-UniRule"/>
</dbReference>
<dbReference type="GO" id="GO:0030388">
    <property type="term" value="P:fructose 1,6-bisphosphate metabolic process"/>
    <property type="evidence" value="ECO:0007669"/>
    <property type="project" value="TreeGrafter"/>
</dbReference>
<dbReference type="GO" id="GO:0006002">
    <property type="term" value="P:fructose 6-phosphate metabolic process"/>
    <property type="evidence" value="ECO:0007669"/>
    <property type="project" value="TreeGrafter"/>
</dbReference>
<dbReference type="GO" id="GO:0006000">
    <property type="term" value="P:fructose metabolic process"/>
    <property type="evidence" value="ECO:0007669"/>
    <property type="project" value="TreeGrafter"/>
</dbReference>
<dbReference type="GO" id="GO:0006094">
    <property type="term" value="P:gluconeogenesis"/>
    <property type="evidence" value="ECO:0007669"/>
    <property type="project" value="UniProtKB-UniRule"/>
</dbReference>
<dbReference type="GO" id="GO:0005986">
    <property type="term" value="P:sucrose biosynthetic process"/>
    <property type="evidence" value="ECO:0007669"/>
    <property type="project" value="TreeGrafter"/>
</dbReference>
<dbReference type="CDD" id="cd00354">
    <property type="entry name" value="FBPase"/>
    <property type="match status" value="1"/>
</dbReference>
<dbReference type="FunFam" id="3.40.190.80:FF:000011">
    <property type="entry name" value="Fructose-1,6-bisphosphatase class 1"/>
    <property type="match status" value="1"/>
</dbReference>
<dbReference type="Gene3D" id="3.40.190.80">
    <property type="match status" value="1"/>
</dbReference>
<dbReference type="Gene3D" id="3.30.540.10">
    <property type="entry name" value="Fructose-1,6-Bisphosphatase, subunit A, domain 1"/>
    <property type="match status" value="1"/>
</dbReference>
<dbReference type="HAMAP" id="MF_01855">
    <property type="entry name" value="FBPase_class1"/>
    <property type="match status" value="1"/>
</dbReference>
<dbReference type="InterPro" id="IPR044015">
    <property type="entry name" value="FBPase_C_dom"/>
</dbReference>
<dbReference type="InterPro" id="IPR000146">
    <property type="entry name" value="FBPase_class-1"/>
</dbReference>
<dbReference type="InterPro" id="IPR033391">
    <property type="entry name" value="FBPase_N"/>
</dbReference>
<dbReference type="InterPro" id="IPR028343">
    <property type="entry name" value="FBPtase"/>
</dbReference>
<dbReference type="NCBIfam" id="NF006779">
    <property type="entry name" value="PRK09293.1-3"/>
    <property type="match status" value="1"/>
</dbReference>
<dbReference type="PANTHER" id="PTHR11556">
    <property type="entry name" value="FRUCTOSE-1,6-BISPHOSPHATASE-RELATED"/>
    <property type="match status" value="1"/>
</dbReference>
<dbReference type="PANTHER" id="PTHR11556:SF35">
    <property type="entry name" value="SEDOHEPTULOSE-1,7-BISPHOSPHATASE, CHLOROPLASTIC"/>
    <property type="match status" value="1"/>
</dbReference>
<dbReference type="Pfam" id="PF00316">
    <property type="entry name" value="FBPase"/>
    <property type="match status" value="1"/>
</dbReference>
<dbReference type="Pfam" id="PF18913">
    <property type="entry name" value="FBPase_C"/>
    <property type="match status" value="1"/>
</dbReference>
<dbReference type="PIRSF" id="PIRSF500210">
    <property type="entry name" value="FBPtase"/>
    <property type="match status" value="1"/>
</dbReference>
<dbReference type="PIRSF" id="PIRSF000904">
    <property type="entry name" value="FBPtase_SBPase"/>
    <property type="match status" value="1"/>
</dbReference>
<dbReference type="PRINTS" id="PR00115">
    <property type="entry name" value="F16BPHPHTASE"/>
</dbReference>
<dbReference type="SUPFAM" id="SSF56655">
    <property type="entry name" value="Carbohydrate phosphatase"/>
    <property type="match status" value="1"/>
</dbReference>
<sequence>MTSLTQYFEQHPKLPQTQAVIDVITTITNVGKQITDLLRQGALADIHGEAGAENVQGEQQKKLDVIANDLLLEALTANKHCAGVASEELDDATPANESGELLVLFDPLDGSSNIDINMPTGTIFSILPHNNKGQAAQNADFLQKGTEQLAAGYLLYGSSAMLAFTLSESLDANNEGVVMFSLNPSTGEFELVKNNITIDADTKEYAINASNARHWLPPMQQYINELLAGSSGPRGKNFNTRWVAAMVGDVHRILCRGGIFIYPKDTKDPNKAGKLRLMYEANPMSLLIERAGGASTDALNRIMDCEPTDIHQRVAVVLGAKNEVEYVQKLHQQA</sequence>
<evidence type="ECO:0000255" key="1">
    <source>
        <dbReference type="HAMAP-Rule" id="MF_01855"/>
    </source>
</evidence>
<feature type="chain" id="PRO_0000364658" description="Fructose-1,6-bisphosphatase class 1">
    <location>
        <begin position="1"/>
        <end position="334"/>
    </location>
</feature>
<feature type="binding site" evidence="1">
    <location>
        <position position="87"/>
    </location>
    <ligand>
        <name>Mg(2+)</name>
        <dbReference type="ChEBI" id="CHEBI:18420"/>
        <label>1</label>
    </ligand>
</feature>
<feature type="binding site" evidence="1">
    <location>
        <position position="106"/>
    </location>
    <ligand>
        <name>Mg(2+)</name>
        <dbReference type="ChEBI" id="CHEBI:18420"/>
        <label>1</label>
    </ligand>
</feature>
<feature type="binding site" evidence="1">
    <location>
        <position position="106"/>
    </location>
    <ligand>
        <name>Mg(2+)</name>
        <dbReference type="ChEBI" id="CHEBI:18420"/>
        <label>2</label>
    </ligand>
</feature>
<feature type="binding site" evidence="1">
    <location>
        <position position="108"/>
    </location>
    <ligand>
        <name>Mg(2+)</name>
        <dbReference type="ChEBI" id="CHEBI:18420"/>
        <label>1</label>
    </ligand>
</feature>
<feature type="binding site" evidence="1">
    <location>
        <begin position="109"/>
        <end position="112"/>
    </location>
    <ligand>
        <name>substrate</name>
    </ligand>
</feature>
<feature type="binding site" evidence="1">
    <location>
        <position position="109"/>
    </location>
    <ligand>
        <name>Mg(2+)</name>
        <dbReference type="ChEBI" id="CHEBI:18420"/>
        <label>2</label>
    </ligand>
</feature>
<feature type="binding site" evidence="1">
    <location>
        <position position="208"/>
    </location>
    <ligand>
        <name>substrate</name>
    </ligand>
</feature>
<feature type="binding site" evidence="1">
    <location>
        <position position="274"/>
    </location>
    <ligand>
        <name>substrate</name>
    </ligand>
</feature>
<feature type="binding site" evidence="1">
    <location>
        <position position="280"/>
    </location>
    <ligand>
        <name>Mg(2+)</name>
        <dbReference type="ChEBI" id="CHEBI:18420"/>
        <label>2</label>
    </ligand>
</feature>
<keyword id="KW-0119">Carbohydrate metabolism</keyword>
<keyword id="KW-0963">Cytoplasm</keyword>
<keyword id="KW-0378">Hydrolase</keyword>
<keyword id="KW-0460">Magnesium</keyword>
<keyword id="KW-0479">Metal-binding</keyword>
<comment type="catalytic activity">
    <reaction evidence="1">
        <text>beta-D-fructose 1,6-bisphosphate + H2O = beta-D-fructose 6-phosphate + phosphate</text>
        <dbReference type="Rhea" id="RHEA:11064"/>
        <dbReference type="ChEBI" id="CHEBI:15377"/>
        <dbReference type="ChEBI" id="CHEBI:32966"/>
        <dbReference type="ChEBI" id="CHEBI:43474"/>
        <dbReference type="ChEBI" id="CHEBI:57634"/>
        <dbReference type="EC" id="3.1.3.11"/>
    </reaction>
</comment>
<comment type="cofactor">
    <cofactor evidence="1">
        <name>Mg(2+)</name>
        <dbReference type="ChEBI" id="CHEBI:18420"/>
    </cofactor>
    <text evidence="1">Binds 2 magnesium ions per subunit.</text>
</comment>
<comment type="pathway">
    <text evidence="1">Carbohydrate biosynthesis; gluconeogenesis.</text>
</comment>
<comment type="subunit">
    <text evidence="1">Homotetramer.</text>
</comment>
<comment type="subcellular location">
    <subcellularLocation>
        <location evidence="1">Cytoplasm</location>
    </subcellularLocation>
</comment>
<comment type="similarity">
    <text evidence="1">Belongs to the FBPase class 1 family.</text>
</comment>
<reference key="1">
    <citation type="submission" date="2007-05" db="EMBL/GenBank/DDBJ databases">
        <title>Complete sequence of chromosome of Psychrobacter sp. PRwf-1.</title>
        <authorList>
            <consortium name="US DOE Joint Genome Institute"/>
            <person name="Copeland A."/>
            <person name="Lucas S."/>
            <person name="Lapidus A."/>
            <person name="Barry K."/>
            <person name="Detter J.C."/>
            <person name="Glavina del Rio T."/>
            <person name="Hammon N."/>
            <person name="Israni S."/>
            <person name="Dalin E."/>
            <person name="Tice H."/>
            <person name="Pitluck S."/>
            <person name="Chain P."/>
            <person name="Malfatti S."/>
            <person name="Shin M."/>
            <person name="Vergez L."/>
            <person name="Schmutz J."/>
            <person name="Larimer F."/>
            <person name="Land M."/>
            <person name="Hauser L."/>
            <person name="Kyrpides N."/>
            <person name="Kim E."/>
            <person name="Tiedje J."/>
            <person name="Richardson P."/>
        </authorList>
    </citation>
    <scope>NUCLEOTIDE SEQUENCE [LARGE SCALE GENOMIC DNA]</scope>
    <source>
        <strain>PRwf-1</strain>
    </source>
</reference>